<reference key="1">
    <citation type="submission" date="2009-05" db="EMBL/GenBank/DDBJ databases">
        <title>Complete sequence of Tolumonas auensis DSM 9187.</title>
        <authorList>
            <consortium name="US DOE Joint Genome Institute"/>
            <person name="Lucas S."/>
            <person name="Copeland A."/>
            <person name="Lapidus A."/>
            <person name="Glavina del Rio T."/>
            <person name="Tice H."/>
            <person name="Bruce D."/>
            <person name="Goodwin L."/>
            <person name="Pitluck S."/>
            <person name="Chertkov O."/>
            <person name="Brettin T."/>
            <person name="Detter J.C."/>
            <person name="Han C."/>
            <person name="Larimer F."/>
            <person name="Land M."/>
            <person name="Hauser L."/>
            <person name="Kyrpides N."/>
            <person name="Mikhailova N."/>
            <person name="Spring S."/>
            <person name="Beller H."/>
        </authorList>
    </citation>
    <scope>NUCLEOTIDE SEQUENCE [LARGE SCALE GENOMIC DNA]</scope>
    <source>
        <strain>DSM 9187 / NBRC 110442 / TA 4</strain>
    </source>
</reference>
<evidence type="ECO:0000255" key="1">
    <source>
        <dbReference type="HAMAP-Rule" id="MF_00067"/>
    </source>
</evidence>
<organism>
    <name type="scientific">Tolumonas auensis (strain DSM 9187 / NBRC 110442 / TA 4)</name>
    <dbReference type="NCBI Taxonomy" id="595494"/>
    <lineage>
        <taxon>Bacteria</taxon>
        <taxon>Pseudomonadati</taxon>
        <taxon>Pseudomonadota</taxon>
        <taxon>Gammaproteobacteria</taxon>
        <taxon>Aeromonadales</taxon>
        <taxon>Aeromonadaceae</taxon>
        <taxon>Tolumonas</taxon>
    </lineage>
</organism>
<feature type="chain" id="PRO_1000202424" description="Phosphoheptose isomerase">
    <location>
        <begin position="1"/>
        <end position="192"/>
    </location>
</feature>
<feature type="domain" description="SIS" evidence="1">
    <location>
        <begin position="37"/>
        <end position="192"/>
    </location>
</feature>
<feature type="binding site" evidence="1">
    <location>
        <begin position="52"/>
        <end position="54"/>
    </location>
    <ligand>
        <name>substrate</name>
    </ligand>
</feature>
<feature type="binding site" evidence="1">
    <location>
        <position position="61"/>
    </location>
    <ligand>
        <name>Zn(2+)</name>
        <dbReference type="ChEBI" id="CHEBI:29105"/>
    </ligand>
</feature>
<feature type="binding site" evidence="1">
    <location>
        <position position="65"/>
    </location>
    <ligand>
        <name>substrate</name>
    </ligand>
</feature>
<feature type="binding site" evidence="1">
    <location>
        <position position="65"/>
    </location>
    <ligand>
        <name>Zn(2+)</name>
        <dbReference type="ChEBI" id="CHEBI:29105"/>
    </ligand>
</feature>
<feature type="binding site" evidence="1">
    <location>
        <begin position="93"/>
        <end position="94"/>
    </location>
    <ligand>
        <name>substrate</name>
    </ligand>
</feature>
<feature type="binding site" evidence="1">
    <location>
        <begin position="119"/>
        <end position="121"/>
    </location>
    <ligand>
        <name>substrate</name>
    </ligand>
</feature>
<feature type="binding site" evidence="1">
    <location>
        <position position="124"/>
    </location>
    <ligand>
        <name>substrate</name>
    </ligand>
</feature>
<feature type="binding site" evidence="1">
    <location>
        <position position="172"/>
    </location>
    <ligand>
        <name>substrate</name>
    </ligand>
</feature>
<feature type="binding site" evidence="1">
    <location>
        <position position="172"/>
    </location>
    <ligand>
        <name>Zn(2+)</name>
        <dbReference type="ChEBI" id="CHEBI:29105"/>
    </ligand>
</feature>
<feature type="binding site" evidence="1">
    <location>
        <position position="180"/>
    </location>
    <ligand>
        <name>Zn(2+)</name>
        <dbReference type="ChEBI" id="CHEBI:29105"/>
    </ligand>
</feature>
<comment type="function">
    <text evidence="1">Catalyzes the isomerization of sedoheptulose 7-phosphate in D-glycero-D-manno-heptose 7-phosphate.</text>
</comment>
<comment type="catalytic activity">
    <reaction evidence="1">
        <text>2 D-sedoheptulose 7-phosphate = D-glycero-alpha-D-manno-heptose 7-phosphate + D-glycero-beta-D-manno-heptose 7-phosphate</text>
        <dbReference type="Rhea" id="RHEA:27489"/>
        <dbReference type="ChEBI" id="CHEBI:57483"/>
        <dbReference type="ChEBI" id="CHEBI:60203"/>
        <dbReference type="ChEBI" id="CHEBI:60204"/>
        <dbReference type="EC" id="5.3.1.28"/>
    </reaction>
</comment>
<comment type="cofactor">
    <cofactor evidence="1">
        <name>Zn(2+)</name>
        <dbReference type="ChEBI" id="CHEBI:29105"/>
    </cofactor>
    <text evidence="1">Binds 1 zinc ion per subunit.</text>
</comment>
<comment type="pathway">
    <text evidence="1">Carbohydrate biosynthesis; D-glycero-D-manno-heptose 7-phosphate biosynthesis; D-glycero-alpha-D-manno-heptose 7-phosphate and D-glycero-beta-D-manno-heptose 7-phosphate from sedoheptulose 7-phosphate: step 1/1.</text>
</comment>
<comment type="subunit">
    <text evidence="1">Homotetramer.</text>
</comment>
<comment type="subcellular location">
    <subcellularLocation>
        <location evidence="1">Cytoplasm</location>
    </subcellularLocation>
</comment>
<comment type="miscellaneous">
    <text evidence="1">The reaction produces a racemic mixture of D-glycero-alpha-D-manno-heptose 7-phosphate and D-glycero-beta-D-manno-heptose 7-phosphate.</text>
</comment>
<comment type="similarity">
    <text evidence="1">Belongs to the SIS family. GmhA subfamily.</text>
</comment>
<name>GMHA_TOLAT</name>
<protein>
    <recommendedName>
        <fullName evidence="1">Phosphoheptose isomerase</fullName>
        <ecNumber evidence="1">5.3.1.28</ecNumber>
    </recommendedName>
    <alternativeName>
        <fullName evidence="1">Sedoheptulose 7-phosphate isomerase</fullName>
    </alternativeName>
</protein>
<keyword id="KW-0119">Carbohydrate metabolism</keyword>
<keyword id="KW-0963">Cytoplasm</keyword>
<keyword id="KW-0413">Isomerase</keyword>
<keyword id="KW-0479">Metal-binding</keyword>
<keyword id="KW-1185">Reference proteome</keyword>
<keyword id="KW-0862">Zinc</keyword>
<sequence>MYQELIKQELVTAQQALADFIADAENINAIERAATLIAASLRDGGKVMSCGNGGSHCDAMHFAEELTGRYREDRPGYAGIAISDPSHLSCVSNDYGYQYVFSRYLEAVGRPGDVMLGISTSGNSQNIITAIESAKAKGIKVVVLTGKDGGKMAGLADVEIRVPYFGYADRIQEIHIKVIHILIMLIEKELAV</sequence>
<gene>
    <name evidence="1" type="primary">gmhA</name>
    <name type="ordered locus">Tola_0913</name>
</gene>
<accession>C4LC62</accession>
<dbReference type="EC" id="5.3.1.28" evidence="1"/>
<dbReference type="EMBL" id="CP001616">
    <property type="protein sequence ID" value="ACQ92541.1"/>
    <property type="molecule type" value="Genomic_DNA"/>
</dbReference>
<dbReference type="RefSeq" id="WP_012729140.1">
    <property type="nucleotide sequence ID" value="NC_012691.1"/>
</dbReference>
<dbReference type="SMR" id="C4LC62"/>
<dbReference type="STRING" id="595494.Tola_0913"/>
<dbReference type="KEGG" id="tau:Tola_0913"/>
<dbReference type="eggNOG" id="COG0279">
    <property type="taxonomic scope" value="Bacteria"/>
</dbReference>
<dbReference type="HOGENOM" id="CLU_080999_4_0_6"/>
<dbReference type="OrthoDB" id="9810929at2"/>
<dbReference type="UniPathway" id="UPA00041">
    <property type="reaction ID" value="UER00436"/>
</dbReference>
<dbReference type="Proteomes" id="UP000009073">
    <property type="component" value="Chromosome"/>
</dbReference>
<dbReference type="GO" id="GO:0005737">
    <property type="term" value="C:cytoplasm"/>
    <property type="evidence" value="ECO:0007669"/>
    <property type="project" value="UniProtKB-SubCell"/>
</dbReference>
<dbReference type="GO" id="GO:0097367">
    <property type="term" value="F:carbohydrate derivative binding"/>
    <property type="evidence" value="ECO:0007669"/>
    <property type="project" value="InterPro"/>
</dbReference>
<dbReference type="GO" id="GO:0008968">
    <property type="term" value="F:D-sedoheptulose 7-phosphate isomerase activity"/>
    <property type="evidence" value="ECO:0007669"/>
    <property type="project" value="UniProtKB-UniRule"/>
</dbReference>
<dbReference type="GO" id="GO:0008270">
    <property type="term" value="F:zinc ion binding"/>
    <property type="evidence" value="ECO:0007669"/>
    <property type="project" value="UniProtKB-UniRule"/>
</dbReference>
<dbReference type="GO" id="GO:0005975">
    <property type="term" value="P:carbohydrate metabolic process"/>
    <property type="evidence" value="ECO:0007669"/>
    <property type="project" value="UniProtKB-UniRule"/>
</dbReference>
<dbReference type="GO" id="GO:2001061">
    <property type="term" value="P:D-glycero-D-manno-heptose 7-phosphate biosynthetic process"/>
    <property type="evidence" value="ECO:0007669"/>
    <property type="project" value="UniProtKB-UniPathway"/>
</dbReference>
<dbReference type="CDD" id="cd05006">
    <property type="entry name" value="SIS_GmhA"/>
    <property type="match status" value="1"/>
</dbReference>
<dbReference type="Gene3D" id="3.40.50.10490">
    <property type="entry name" value="Glucose-6-phosphate isomerase like protein, domain 1"/>
    <property type="match status" value="1"/>
</dbReference>
<dbReference type="HAMAP" id="MF_00067">
    <property type="entry name" value="GmhA"/>
    <property type="match status" value="1"/>
</dbReference>
<dbReference type="InterPro" id="IPR035461">
    <property type="entry name" value="GmhA/DiaA"/>
</dbReference>
<dbReference type="InterPro" id="IPR004515">
    <property type="entry name" value="Phosphoheptose_Isoase"/>
</dbReference>
<dbReference type="InterPro" id="IPR001347">
    <property type="entry name" value="SIS_dom"/>
</dbReference>
<dbReference type="InterPro" id="IPR046348">
    <property type="entry name" value="SIS_dom_sf"/>
</dbReference>
<dbReference type="InterPro" id="IPR050099">
    <property type="entry name" value="SIS_GmhA/DiaA_subfam"/>
</dbReference>
<dbReference type="NCBIfam" id="TIGR00441">
    <property type="entry name" value="gmhA"/>
    <property type="match status" value="1"/>
</dbReference>
<dbReference type="NCBIfam" id="NF001628">
    <property type="entry name" value="PRK00414.1"/>
    <property type="match status" value="1"/>
</dbReference>
<dbReference type="PANTHER" id="PTHR30390:SF7">
    <property type="entry name" value="PHOSPHOHEPTOSE ISOMERASE"/>
    <property type="match status" value="1"/>
</dbReference>
<dbReference type="PANTHER" id="PTHR30390">
    <property type="entry name" value="SEDOHEPTULOSE 7-PHOSPHATE ISOMERASE / DNAA INITIATOR-ASSOCIATING FACTOR FOR REPLICATION INITIATION"/>
    <property type="match status" value="1"/>
</dbReference>
<dbReference type="Pfam" id="PF13580">
    <property type="entry name" value="SIS_2"/>
    <property type="match status" value="1"/>
</dbReference>
<dbReference type="SUPFAM" id="SSF53697">
    <property type="entry name" value="SIS domain"/>
    <property type="match status" value="1"/>
</dbReference>
<dbReference type="PROSITE" id="PS51464">
    <property type="entry name" value="SIS"/>
    <property type="match status" value="1"/>
</dbReference>
<proteinExistence type="inferred from homology"/>